<organism>
    <name type="scientific">Xanthomonas axonopodis pv. citri (strain 306)</name>
    <dbReference type="NCBI Taxonomy" id="190486"/>
    <lineage>
        <taxon>Bacteria</taxon>
        <taxon>Pseudomonadati</taxon>
        <taxon>Pseudomonadota</taxon>
        <taxon>Gammaproteobacteria</taxon>
        <taxon>Lysobacterales</taxon>
        <taxon>Lysobacteraceae</taxon>
        <taxon>Xanthomonas</taxon>
    </lineage>
</organism>
<comment type="function">
    <text evidence="1">Catalyzes the oxidation of either pyridoxine 5'-phosphate (PNP) or pyridoxamine 5'-phosphate (PMP) into pyridoxal 5'-phosphate (PLP).</text>
</comment>
<comment type="catalytic activity">
    <reaction evidence="1">
        <text>pyridoxamine 5'-phosphate + O2 + H2O = pyridoxal 5'-phosphate + H2O2 + NH4(+)</text>
        <dbReference type="Rhea" id="RHEA:15817"/>
        <dbReference type="ChEBI" id="CHEBI:15377"/>
        <dbReference type="ChEBI" id="CHEBI:15379"/>
        <dbReference type="ChEBI" id="CHEBI:16240"/>
        <dbReference type="ChEBI" id="CHEBI:28938"/>
        <dbReference type="ChEBI" id="CHEBI:58451"/>
        <dbReference type="ChEBI" id="CHEBI:597326"/>
        <dbReference type="EC" id="1.4.3.5"/>
    </reaction>
</comment>
<comment type="catalytic activity">
    <reaction evidence="1">
        <text>pyridoxine 5'-phosphate + O2 = pyridoxal 5'-phosphate + H2O2</text>
        <dbReference type="Rhea" id="RHEA:15149"/>
        <dbReference type="ChEBI" id="CHEBI:15379"/>
        <dbReference type="ChEBI" id="CHEBI:16240"/>
        <dbReference type="ChEBI" id="CHEBI:58589"/>
        <dbReference type="ChEBI" id="CHEBI:597326"/>
        <dbReference type="EC" id="1.4.3.5"/>
    </reaction>
</comment>
<comment type="cofactor">
    <cofactor evidence="1">
        <name>FMN</name>
        <dbReference type="ChEBI" id="CHEBI:58210"/>
    </cofactor>
    <text evidence="1">Binds 1 FMN per subunit.</text>
</comment>
<comment type="pathway">
    <text evidence="1">Cofactor metabolism; pyridoxal 5'-phosphate salvage; pyridoxal 5'-phosphate from pyridoxamine 5'-phosphate: step 1/1.</text>
</comment>
<comment type="pathway">
    <text evidence="1">Cofactor metabolism; pyridoxal 5'-phosphate salvage; pyridoxal 5'-phosphate from pyridoxine 5'-phosphate: step 1/1.</text>
</comment>
<comment type="subunit">
    <text evidence="1">Homodimer.</text>
</comment>
<comment type="similarity">
    <text evidence="1">Belongs to the pyridoxamine 5'-phosphate oxidase family.</text>
</comment>
<proteinExistence type="inferred from homology"/>
<keyword id="KW-0285">Flavoprotein</keyword>
<keyword id="KW-0288">FMN</keyword>
<keyword id="KW-0560">Oxidoreductase</keyword>
<keyword id="KW-0664">Pyridoxine biosynthesis</keyword>
<evidence type="ECO:0000255" key="1">
    <source>
        <dbReference type="HAMAP-Rule" id="MF_01629"/>
    </source>
</evidence>
<gene>
    <name evidence="1" type="primary">pdxH</name>
    <name type="ordered locus">XAC3009</name>
</gene>
<accession>Q8PI89</accession>
<reference key="1">
    <citation type="journal article" date="2002" name="Nature">
        <title>Comparison of the genomes of two Xanthomonas pathogens with differing host specificities.</title>
        <authorList>
            <person name="da Silva A.C.R."/>
            <person name="Ferro J.A."/>
            <person name="Reinach F.C."/>
            <person name="Farah C.S."/>
            <person name="Furlan L.R."/>
            <person name="Quaggio R.B."/>
            <person name="Monteiro-Vitorello C.B."/>
            <person name="Van Sluys M.A."/>
            <person name="Almeida N.F. Jr."/>
            <person name="Alves L.M.C."/>
            <person name="do Amaral A.M."/>
            <person name="Bertolini M.C."/>
            <person name="Camargo L.E.A."/>
            <person name="Camarotte G."/>
            <person name="Cannavan F."/>
            <person name="Cardozo J."/>
            <person name="Chambergo F."/>
            <person name="Ciapina L.P."/>
            <person name="Cicarelli R.M.B."/>
            <person name="Coutinho L.L."/>
            <person name="Cursino-Santos J.R."/>
            <person name="El-Dorry H."/>
            <person name="Faria J.B."/>
            <person name="Ferreira A.J.S."/>
            <person name="Ferreira R.C.C."/>
            <person name="Ferro M.I.T."/>
            <person name="Formighieri E.F."/>
            <person name="Franco M.C."/>
            <person name="Greggio C.C."/>
            <person name="Gruber A."/>
            <person name="Katsuyama A.M."/>
            <person name="Kishi L.T."/>
            <person name="Leite R.P."/>
            <person name="Lemos E.G.M."/>
            <person name="Lemos M.V.F."/>
            <person name="Locali E.C."/>
            <person name="Machado M.A."/>
            <person name="Madeira A.M.B.N."/>
            <person name="Martinez-Rossi N.M."/>
            <person name="Martins E.C."/>
            <person name="Meidanis J."/>
            <person name="Menck C.F.M."/>
            <person name="Miyaki C.Y."/>
            <person name="Moon D.H."/>
            <person name="Moreira L.M."/>
            <person name="Novo M.T.M."/>
            <person name="Okura V.K."/>
            <person name="Oliveira M.C."/>
            <person name="Oliveira V.R."/>
            <person name="Pereira H.A."/>
            <person name="Rossi A."/>
            <person name="Sena J.A.D."/>
            <person name="Silva C."/>
            <person name="de Souza R.F."/>
            <person name="Spinola L.A.F."/>
            <person name="Takita M.A."/>
            <person name="Tamura R.E."/>
            <person name="Teixeira E.C."/>
            <person name="Tezza R.I.D."/>
            <person name="Trindade dos Santos M."/>
            <person name="Truffi D."/>
            <person name="Tsai S.M."/>
            <person name="White F.F."/>
            <person name="Setubal J.C."/>
            <person name="Kitajima J.P."/>
        </authorList>
    </citation>
    <scope>NUCLEOTIDE SEQUENCE [LARGE SCALE GENOMIC DNA]</scope>
    <source>
        <strain>306</strain>
    </source>
</reference>
<protein>
    <recommendedName>
        <fullName evidence="1">Pyridoxine/pyridoxamine 5'-phosphate oxidase</fullName>
        <ecNumber evidence="1">1.4.3.5</ecNumber>
    </recommendedName>
    <alternativeName>
        <fullName evidence="1">PNP/PMP oxidase</fullName>
        <shortName evidence="1">PNPOx</shortName>
    </alternativeName>
    <alternativeName>
        <fullName evidence="1">Pyridoxal 5'-phosphate synthase</fullName>
    </alternativeName>
</protein>
<feature type="chain" id="PRO_0000167772" description="Pyridoxine/pyridoxamine 5'-phosphate oxidase">
    <location>
        <begin position="1"/>
        <end position="199"/>
    </location>
</feature>
<feature type="binding site" evidence="1">
    <location>
        <begin position="44"/>
        <end position="49"/>
    </location>
    <ligand>
        <name>FMN</name>
        <dbReference type="ChEBI" id="CHEBI:58210"/>
    </ligand>
</feature>
<feature type="binding site" evidence="1">
    <location>
        <position position="49"/>
    </location>
    <ligand>
        <name>substrate</name>
    </ligand>
</feature>
<feature type="binding site" evidence="1">
    <location>
        <begin position="59"/>
        <end position="60"/>
    </location>
    <ligand>
        <name>FMN</name>
        <dbReference type="ChEBI" id="CHEBI:58210"/>
    </ligand>
</feature>
<feature type="binding site" evidence="1">
    <location>
        <position position="66"/>
    </location>
    <ligand>
        <name>FMN</name>
        <dbReference type="ChEBI" id="CHEBI:58210"/>
    </ligand>
</feature>
<feature type="binding site" evidence="1">
    <location>
        <position position="91"/>
    </location>
    <ligand>
        <name>FMN</name>
        <dbReference type="ChEBI" id="CHEBI:58210"/>
    </ligand>
</feature>
<feature type="binding site" evidence="1">
    <location>
        <position position="109"/>
    </location>
    <ligand>
        <name>substrate</name>
    </ligand>
</feature>
<feature type="binding site" evidence="1">
    <location>
        <position position="113"/>
    </location>
    <ligand>
        <name>substrate</name>
    </ligand>
</feature>
<feature type="binding site" evidence="1">
    <location>
        <position position="117"/>
    </location>
    <ligand>
        <name>substrate</name>
    </ligand>
</feature>
<feature type="binding site" evidence="1">
    <location>
        <begin position="126"/>
        <end position="127"/>
    </location>
    <ligand>
        <name>FMN</name>
        <dbReference type="ChEBI" id="CHEBI:58210"/>
    </ligand>
</feature>
<feature type="binding site" evidence="1">
    <location>
        <position position="171"/>
    </location>
    <ligand>
        <name>FMN</name>
        <dbReference type="ChEBI" id="CHEBI:58210"/>
    </ligand>
</feature>
<feature type="binding site" evidence="1">
    <location>
        <begin position="177"/>
        <end position="179"/>
    </location>
    <ligand>
        <name>substrate</name>
    </ligand>
</feature>
<feature type="binding site" evidence="1">
    <location>
        <position position="181"/>
    </location>
    <ligand>
        <name>FMN</name>
        <dbReference type="ChEBI" id="CHEBI:58210"/>
    </ligand>
</feature>
<dbReference type="EC" id="1.4.3.5" evidence="1"/>
<dbReference type="EMBL" id="AE008923">
    <property type="protein sequence ID" value="AAM37854.1"/>
    <property type="molecule type" value="Genomic_DNA"/>
</dbReference>
<dbReference type="RefSeq" id="WP_011051972.1">
    <property type="nucleotide sequence ID" value="NC_003919.1"/>
</dbReference>
<dbReference type="SMR" id="Q8PI89"/>
<dbReference type="GeneID" id="66912084"/>
<dbReference type="KEGG" id="xac:XAC3009"/>
<dbReference type="eggNOG" id="COG0259">
    <property type="taxonomic scope" value="Bacteria"/>
</dbReference>
<dbReference type="HOGENOM" id="CLU_032263_2_3_6"/>
<dbReference type="UniPathway" id="UPA01068">
    <property type="reaction ID" value="UER00304"/>
</dbReference>
<dbReference type="UniPathway" id="UPA01068">
    <property type="reaction ID" value="UER00305"/>
</dbReference>
<dbReference type="Proteomes" id="UP000000576">
    <property type="component" value="Chromosome"/>
</dbReference>
<dbReference type="GO" id="GO:0010181">
    <property type="term" value="F:FMN binding"/>
    <property type="evidence" value="ECO:0007669"/>
    <property type="project" value="UniProtKB-UniRule"/>
</dbReference>
<dbReference type="GO" id="GO:0004733">
    <property type="term" value="F:pyridoxamine phosphate oxidase activity"/>
    <property type="evidence" value="ECO:0007669"/>
    <property type="project" value="UniProtKB-UniRule"/>
</dbReference>
<dbReference type="GO" id="GO:0008615">
    <property type="term" value="P:pyridoxine biosynthetic process"/>
    <property type="evidence" value="ECO:0007669"/>
    <property type="project" value="UniProtKB-KW"/>
</dbReference>
<dbReference type="FunFam" id="2.30.110.10:FF:000012">
    <property type="entry name" value="Predicted protein"/>
    <property type="match status" value="1"/>
</dbReference>
<dbReference type="Gene3D" id="2.30.110.10">
    <property type="entry name" value="Electron Transport, Fmn-binding Protein, Chain A"/>
    <property type="match status" value="1"/>
</dbReference>
<dbReference type="HAMAP" id="MF_01629">
    <property type="entry name" value="PdxH"/>
    <property type="match status" value="1"/>
</dbReference>
<dbReference type="InterPro" id="IPR000659">
    <property type="entry name" value="Pyridox_Oxase"/>
</dbReference>
<dbReference type="InterPro" id="IPR019740">
    <property type="entry name" value="Pyridox_Oxase_CS"/>
</dbReference>
<dbReference type="InterPro" id="IPR011576">
    <property type="entry name" value="Pyridox_Oxase_N"/>
</dbReference>
<dbReference type="InterPro" id="IPR019576">
    <property type="entry name" value="Pyridoxamine_oxidase_dimer_C"/>
</dbReference>
<dbReference type="InterPro" id="IPR012349">
    <property type="entry name" value="Split_barrel_FMN-bd"/>
</dbReference>
<dbReference type="NCBIfam" id="TIGR00558">
    <property type="entry name" value="pdxH"/>
    <property type="match status" value="1"/>
</dbReference>
<dbReference type="NCBIfam" id="NF004231">
    <property type="entry name" value="PRK05679.1"/>
    <property type="match status" value="1"/>
</dbReference>
<dbReference type="PANTHER" id="PTHR10851:SF0">
    <property type="entry name" value="PYRIDOXINE-5'-PHOSPHATE OXIDASE"/>
    <property type="match status" value="1"/>
</dbReference>
<dbReference type="PANTHER" id="PTHR10851">
    <property type="entry name" value="PYRIDOXINE-5-PHOSPHATE OXIDASE"/>
    <property type="match status" value="1"/>
</dbReference>
<dbReference type="Pfam" id="PF10590">
    <property type="entry name" value="PNP_phzG_C"/>
    <property type="match status" value="1"/>
</dbReference>
<dbReference type="Pfam" id="PF01243">
    <property type="entry name" value="PNPOx_N"/>
    <property type="match status" value="1"/>
</dbReference>
<dbReference type="PIRSF" id="PIRSF000190">
    <property type="entry name" value="Pyd_amn-ph_oxd"/>
    <property type="match status" value="1"/>
</dbReference>
<dbReference type="SUPFAM" id="SSF50475">
    <property type="entry name" value="FMN-binding split barrel"/>
    <property type="match status" value="1"/>
</dbReference>
<dbReference type="PROSITE" id="PS01064">
    <property type="entry name" value="PYRIDOX_OXIDASE"/>
    <property type="match status" value="1"/>
</dbReference>
<name>PDXH_XANAC</name>
<sequence length="199" mass="22200">MTDLYAEALATFAALYAEAQNSAELEASAMTVATANVDGRPSARTVLLKAFDARGFVFYTHLDSAKGRDLQTHPQAALLFLWRSLREAGIQVRIEGGVQLVSADESDAYFASRPRMSQIGAWASRQSQALGSREEFDAAIAKVEATFAGREVPRPDGWGGFRVVPQAFEFWYGAKFRLHERWRYEADAASHWSKRMLYP</sequence>